<comment type="function">
    <text evidence="1">Binds to 23S rRNA. Forms part of two intersubunit bridges in the 70S ribosome.</text>
</comment>
<comment type="subunit">
    <text evidence="1">Part of the 50S ribosomal subunit. Forms a cluster with proteins L3 and L19. In the 70S ribosome, L14 and L19 interact and together make contacts with the 16S rRNA in bridges B5 and B8.</text>
</comment>
<comment type="similarity">
    <text evidence="1">Belongs to the universal ribosomal protein uL14 family.</text>
</comment>
<organism>
    <name type="scientific">Mycoplasma mycoides subsp. mycoides SC (strain CCUG 32753 / NCTC 10114 / PG1)</name>
    <dbReference type="NCBI Taxonomy" id="272632"/>
    <lineage>
        <taxon>Bacteria</taxon>
        <taxon>Bacillati</taxon>
        <taxon>Mycoplasmatota</taxon>
        <taxon>Mollicutes</taxon>
        <taxon>Mycoplasmataceae</taxon>
        <taxon>Mycoplasma</taxon>
    </lineage>
</organism>
<proteinExistence type="inferred from homology"/>
<accession>Q6MSN5</accession>
<gene>
    <name evidence="1" type="primary">rplN</name>
    <name type="ordered locus">MSC_0735</name>
</gene>
<name>RL14_MYCMS</name>
<feature type="chain" id="PRO_1000055639" description="Large ribosomal subunit protein uL14">
    <location>
        <begin position="1"/>
        <end position="122"/>
    </location>
</feature>
<protein>
    <recommendedName>
        <fullName evidence="1">Large ribosomal subunit protein uL14</fullName>
    </recommendedName>
    <alternativeName>
        <fullName evidence="2">50S ribosomal protein L14</fullName>
    </alternativeName>
</protein>
<keyword id="KW-1185">Reference proteome</keyword>
<keyword id="KW-0687">Ribonucleoprotein</keyword>
<keyword id="KW-0689">Ribosomal protein</keyword>
<keyword id="KW-0694">RNA-binding</keyword>
<keyword id="KW-0699">rRNA-binding</keyword>
<dbReference type="EMBL" id="BX293980">
    <property type="protein sequence ID" value="CAE77353.1"/>
    <property type="molecule type" value="Genomic_DNA"/>
</dbReference>
<dbReference type="RefSeq" id="NP_975711.1">
    <property type="nucleotide sequence ID" value="NC_005364.2"/>
</dbReference>
<dbReference type="RefSeq" id="WP_011166903.1">
    <property type="nucleotide sequence ID" value="NC_005364.2"/>
</dbReference>
<dbReference type="SMR" id="Q6MSN5"/>
<dbReference type="STRING" id="272632.MSC_0735"/>
<dbReference type="GeneID" id="93426143"/>
<dbReference type="KEGG" id="mmy:MSC_0735"/>
<dbReference type="PATRIC" id="fig|272632.4.peg.792"/>
<dbReference type="eggNOG" id="COG0093">
    <property type="taxonomic scope" value="Bacteria"/>
</dbReference>
<dbReference type="HOGENOM" id="CLU_095071_2_1_14"/>
<dbReference type="PRO" id="PR:Q6MSN5"/>
<dbReference type="Proteomes" id="UP000001016">
    <property type="component" value="Chromosome"/>
</dbReference>
<dbReference type="GO" id="GO:0022625">
    <property type="term" value="C:cytosolic large ribosomal subunit"/>
    <property type="evidence" value="ECO:0007669"/>
    <property type="project" value="TreeGrafter"/>
</dbReference>
<dbReference type="GO" id="GO:0070180">
    <property type="term" value="F:large ribosomal subunit rRNA binding"/>
    <property type="evidence" value="ECO:0007669"/>
    <property type="project" value="TreeGrafter"/>
</dbReference>
<dbReference type="GO" id="GO:0003735">
    <property type="term" value="F:structural constituent of ribosome"/>
    <property type="evidence" value="ECO:0007669"/>
    <property type="project" value="InterPro"/>
</dbReference>
<dbReference type="GO" id="GO:0006412">
    <property type="term" value="P:translation"/>
    <property type="evidence" value="ECO:0007669"/>
    <property type="project" value="UniProtKB-UniRule"/>
</dbReference>
<dbReference type="CDD" id="cd00337">
    <property type="entry name" value="Ribosomal_uL14"/>
    <property type="match status" value="1"/>
</dbReference>
<dbReference type="Gene3D" id="2.40.150.20">
    <property type="entry name" value="Ribosomal protein L14"/>
    <property type="match status" value="1"/>
</dbReference>
<dbReference type="HAMAP" id="MF_01367">
    <property type="entry name" value="Ribosomal_uL14"/>
    <property type="match status" value="1"/>
</dbReference>
<dbReference type="InterPro" id="IPR000218">
    <property type="entry name" value="Ribosomal_uL14"/>
</dbReference>
<dbReference type="InterPro" id="IPR005745">
    <property type="entry name" value="Ribosomal_uL14_bac-type"/>
</dbReference>
<dbReference type="InterPro" id="IPR019972">
    <property type="entry name" value="Ribosomal_uL14_CS"/>
</dbReference>
<dbReference type="InterPro" id="IPR036853">
    <property type="entry name" value="Ribosomal_uL14_sf"/>
</dbReference>
<dbReference type="NCBIfam" id="TIGR01067">
    <property type="entry name" value="rplN_bact"/>
    <property type="match status" value="1"/>
</dbReference>
<dbReference type="PANTHER" id="PTHR11761">
    <property type="entry name" value="50S/60S RIBOSOMAL PROTEIN L14/L23"/>
    <property type="match status" value="1"/>
</dbReference>
<dbReference type="PANTHER" id="PTHR11761:SF3">
    <property type="entry name" value="LARGE RIBOSOMAL SUBUNIT PROTEIN UL14M"/>
    <property type="match status" value="1"/>
</dbReference>
<dbReference type="Pfam" id="PF00238">
    <property type="entry name" value="Ribosomal_L14"/>
    <property type="match status" value="1"/>
</dbReference>
<dbReference type="SMART" id="SM01374">
    <property type="entry name" value="Ribosomal_L14"/>
    <property type="match status" value="1"/>
</dbReference>
<dbReference type="SUPFAM" id="SSF50193">
    <property type="entry name" value="Ribosomal protein L14"/>
    <property type="match status" value="1"/>
</dbReference>
<dbReference type="PROSITE" id="PS00049">
    <property type="entry name" value="RIBOSOMAL_L14"/>
    <property type="match status" value="1"/>
</dbReference>
<reference key="1">
    <citation type="journal article" date="2004" name="Genome Res.">
        <title>The genome sequence of Mycoplasma mycoides subsp. mycoides SC type strain PG1T, the causative agent of contagious bovine pleuropneumonia (CBPP).</title>
        <authorList>
            <person name="Westberg J."/>
            <person name="Persson A."/>
            <person name="Holmberg A."/>
            <person name="Goesmann A."/>
            <person name="Lundeberg J."/>
            <person name="Johansson K.-E."/>
            <person name="Pettersson B."/>
            <person name="Uhlen M."/>
        </authorList>
    </citation>
    <scope>NUCLEOTIDE SEQUENCE [LARGE SCALE GENOMIC DNA]</scope>
    <source>
        <strain>CCUG 32753 / NCTC 10114 / PG1</strain>
    </source>
</reference>
<evidence type="ECO:0000255" key="1">
    <source>
        <dbReference type="HAMAP-Rule" id="MF_01367"/>
    </source>
</evidence>
<evidence type="ECO:0000305" key="2"/>
<sequence length="122" mass="13148">MIQTLSKLKVADNSGAKEVRVIRNLGGSVRKFSGIGDIIICSVISATPGAVIKKGQVVKAVIVRTTRELRREDGTYIKFSENAAVLIKEDKTPRGTRIFGPIAREIKEAGFAKIASLAPEVL</sequence>